<gene>
    <name type="primary">Rps19</name>
</gene>
<protein>
    <recommendedName>
        <fullName evidence="3">Small ribosomal subunit protein eS19</fullName>
    </recommendedName>
    <alternativeName>
        <fullName>40S ribosomal protein S19</fullName>
    </alternativeName>
</protein>
<proteinExistence type="evidence at protein level"/>
<comment type="function">
    <text evidence="1">Component of the small ribosomal subunit. The ribosome is a large ribonucleoprotein complex responsible for the synthesis of proteins in the cell. Required for pre-rRNA processing and maturation of 40S ribosomal subunits. Part of the small subunit (SSU) processome, first precursor of the small eukaryotic ribosomal subunit. During the assembly of the SSU processome in the nucleolus, many ribosome biogenesis factors, an RNA chaperone and ribosomal proteins associate with the nascent pre-rRNA and work in concert to generate RNA folding, modifications, rearrangements and cleavage as well as targeted degradation of pre-ribosomal RNA by the RNA exosome (By similarity).</text>
</comment>
<comment type="subunit">
    <text evidence="1 2">Component of the small ribosomal subunit (By similarity). Part of the small subunit (SSU) processome, composed of more than 70 proteins and the RNA chaperone small nucleolar RNA (snoRNA) U3 (By similarity). Interacts with RPS19BP1 (By similarity).</text>
</comment>
<comment type="subcellular location">
    <subcellularLocation>
        <location evidence="1">Cytoplasm</location>
    </subcellularLocation>
    <subcellularLocation>
        <location evidence="1">Nucleus</location>
        <location evidence="1">Nucleolus</location>
    </subcellularLocation>
</comment>
<comment type="similarity">
    <text evidence="3">Belongs to the eukaryotic ribosomal protein eS19 family.</text>
</comment>
<feature type="chain" id="PRO_0000153814" description="Small ribosomal subunit protein eS19">
    <location>
        <begin position="1"/>
        <end position="145"/>
    </location>
</feature>
<feature type="modified residue" description="N6-acetyllysine" evidence="1">
    <location>
        <position position="23"/>
    </location>
</feature>
<feature type="modified residue" description="Omega-N-methylarginine" evidence="1">
    <location>
        <position position="67"/>
    </location>
</feature>
<feature type="modified residue" description="N6-acetyllysine" evidence="1">
    <location>
        <position position="111"/>
    </location>
</feature>
<feature type="modified residue" description="N6-acetyllysine" evidence="2">
    <location>
        <position position="115"/>
    </location>
</feature>
<feature type="modified residue" description="N6-succinyllysine" evidence="2">
    <location>
        <position position="143"/>
    </location>
</feature>
<accession>P17074</accession>
<evidence type="ECO:0000250" key="1">
    <source>
        <dbReference type="UniProtKB" id="P39019"/>
    </source>
</evidence>
<evidence type="ECO:0000250" key="2">
    <source>
        <dbReference type="UniProtKB" id="Q9CZX8"/>
    </source>
</evidence>
<evidence type="ECO:0000305" key="3"/>
<keyword id="KW-0002">3D-structure</keyword>
<keyword id="KW-0007">Acetylation</keyword>
<keyword id="KW-0963">Cytoplasm</keyword>
<keyword id="KW-0488">Methylation</keyword>
<keyword id="KW-0539">Nucleus</keyword>
<keyword id="KW-1185">Reference proteome</keyword>
<keyword id="KW-0687">Ribonucleoprotein</keyword>
<keyword id="KW-0689">Ribosomal protein</keyword>
<sequence>MPGVTVKDVNQQEFVRALAAFLKKSGKLKVPEWVDTVKLAKHKELAPYDENWFYTRAASTARHLYLRGGAGVGSMTKIYGGRQRNGVRPSHFSRGSKSVARRVLQALEGLKMVEKDQDGGRKLTPQGQRDLDRIAGQVAAANKKH</sequence>
<name>RS19_RAT</name>
<reference key="1">
    <citation type="journal article" date="1990" name="Biochimie">
        <title>The primary structure of rat ribosomal protein S19.</title>
        <authorList>
            <person name="Suzuki K."/>
            <person name="Olvera J."/>
            <person name="Wool I.G."/>
        </authorList>
    </citation>
    <scope>NUCLEOTIDE SEQUENCE [MRNA]</scope>
    <source>
        <strain>Sprague-Dawley</strain>
        <tissue>Liver</tissue>
    </source>
</reference>
<reference key="2">
    <citation type="journal article" date="2004" name="Genome Res.">
        <title>The status, quality, and expansion of the NIH full-length cDNA project: the Mammalian Gene Collection (MGC).</title>
        <authorList>
            <consortium name="The MGC Project Team"/>
        </authorList>
    </citation>
    <scope>NUCLEOTIDE SEQUENCE [LARGE SCALE MRNA]</scope>
    <source>
        <tissue>Ovary</tissue>
    </source>
</reference>
<organism>
    <name type="scientific">Rattus norvegicus</name>
    <name type="common">Rat</name>
    <dbReference type="NCBI Taxonomy" id="10116"/>
    <lineage>
        <taxon>Eukaryota</taxon>
        <taxon>Metazoa</taxon>
        <taxon>Chordata</taxon>
        <taxon>Craniata</taxon>
        <taxon>Vertebrata</taxon>
        <taxon>Euteleostomi</taxon>
        <taxon>Mammalia</taxon>
        <taxon>Eutheria</taxon>
        <taxon>Euarchontoglires</taxon>
        <taxon>Glires</taxon>
        <taxon>Rodentia</taxon>
        <taxon>Myomorpha</taxon>
        <taxon>Muroidea</taxon>
        <taxon>Muridae</taxon>
        <taxon>Murinae</taxon>
        <taxon>Rattus</taxon>
    </lineage>
</organism>
<dbReference type="EMBL" id="X51707">
    <property type="protein sequence ID" value="CAA36003.1"/>
    <property type="molecule type" value="mRNA"/>
</dbReference>
<dbReference type="EMBL" id="BC087641">
    <property type="protein sequence ID" value="AAH87641.1"/>
    <property type="molecule type" value="mRNA"/>
</dbReference>
<dbReference type="PIR" id="A43770">
    <property type="entry name" value="R3RT19"/>
</dbReference>
<dbReference type="RefSeq" id="NP_001032423.1">
    <property type="nucleotide sequence ID" value="NM_001037346.2"/>
</dbReference>
<dbReference type="RefSeq" id="XP_006228473.1">
    <property type="nucleotide sequence ID" value="XM_006228411.3"/>
</dbReference>
<dbReference type="RefSeq" id="XP_017444775.1">
    <property type="nucleotide sequence ID" value="XM_017589286.1"/>
</dbReference>
<dbReference type="RefSeq" id="XP_017444777.1">
    <property type="nucleotide sequence ID" value="XM_017589288.1"/>
</dbReference>
<dbReference type="RefSeq" id="XP_017445502.1">
    <property type="nucleotide sequence ID" value="XM_017590013.1"/>
</dbReference>
<dbReference type="RefSeq" id="XP_063139963.1">
    <property type="nucleotide sequence ID" value="XM_063283893.1"/>
</dbReference>
<dbReference type="PDB" id="7QGG">
    <property type="method" value="EM"/>
    <property type="resolution" value="2.86 A"/>
    <property type="chains" value="ST=1-145"/>
</dbReference>
<dbReference type="PDBsum" id="7QGG"/>
<dbReference type="EMDB" id="EMD-13954"/>
<dbReference type="SMR" id="P17074"/>
<dbReference type="BioGRID" id="247957">
    <property type="interactions" value="3"/>
</dbReference>
<dbReference type="FunCoup" id="P17074">
    <property type="interactions" value="2254"/>
</dbReference>
<dbReference type="IntAct" id="P17074">
    <property type="interactions" value="6"/>
</dbReference>
<dbReference type="MINT" id="P17074"/>
<dbReference type="STRING" id="10116.ENSRNOP00000027246"/>
<dbReference type="iPTMnet" id="P17074"/>
<dbReference type="PhosphoSitePlus" id="P17074"/>
<dbReference type="jPOST" id="P17074"/>
<dbReference type="PaxDb" id="10116-ENSRNOP00000027246"/>
<dbReference type="GeneID" id="29287"/>
<dbReference type="KEGG" id="rno:29287"/>
<dbReference type="UCSC" id="RGD:68440">
    <property type="organism name" value="rat"/>
</dbReference>
<dbReference type="AGR" id="RGD:68440"/>
<dbReference type="CTD" id="6223"/>
<dbReference type="RGD" id="68440">
    <property type="gene designation" value="Rps19"/>
</dbReference>
<dbReference type="VEuPathDB" id="HostDB:ENSRNOG00000037897"/>
<dbReference type="eggNOG" id="KOG3411">
    <property type="taxonomic scope" value="Eukaryota"/>
</dbReference>
<dbReference type="HOGENOM" id="CLU_108559_0_1_1"/>
<dbReference type="InParanoid" id="P17074"/>
<dbReference type="OrthoDB" id="10462at9989"/>
<dbReference type="PhylomeDB" id="P17074"/>
<dbReference type="TreeFam" id="TF315008"/>
<dbReference type="Reactome" id="R-RNO-156827">
    <property type="pathway name" value="L13a-mediated translational silencing of Ceruloplasmin expression"/>
</dbReference>
<dbReference type="Reactome" id="R-RNO-1799339">
    <property type="pathway name" value="SRP-dependent cotranslational protein targeting to membrane"/>
</dbReference>
<dbReference type="Reactome" id="R-RNO-6791226">
    <property type="pathway name" value="Major pathway of rRNA processing in the nucleolus and cytosol"/>
</dbReference>
<dbReference type="Reactome" id="R-RNO-72649">
    <property type="pathway name" value="Translation initiation complex formation"/>
</dbReference>
<dbReference type="Reactome" id="R-RNO-72689">
    <property type="pathway name" value="Formation of a pool of free 40S subunits"/>
</dbReference>
<dbReference type="Reactome" id="R-RNO-72695">
    <property type="pathway name" value="Formation of the ternary complex, and subsequently, the 43S complex"/>
</dbReference>
<dbReference type="Reactome" id="R-RNO-72702">
    <property type="pathway name" value="Ribosomal scanning and start codon recognition"/>
</dbReference>
<dbReference type="Reactome" id="R-RNO-72706">
    <property type="pathway name" value="GTP hydrolysis and joining of the 60S ribosomal subunit"/>
</dbReference>
<dbReference type="Reactome" id="R-RNO-975956">
    <property type="pathway name" value="Nonsense Mediated Decay (NMD) independent of the Exon Junction Complex (EJC)"/>
</dbReference>
<dbReference type="Reactome" id="R-RNO-975957">
    <property type="pathway name" value="Nonsense Mediated Decay (NMD) enhanced by the Exon Junction Complex (EJC)"/>
</dbReference>
<dbReference type="PRO" id="PR:P17074"/>
<dbReference type="Proteomes" id="UP000002494">
    <property type="component" value="Chromosome 1"/>
</dbReference>
<dbReference type="Bgee" id="ENSRNOG00000037897">
    <property type="expression patterns" value="Expressed in ovary and 19 other cell types or tissues"/>
</dbReference>
<dbReference type="GO" id="GO:0005737">
    <property type="term" value="C:cytoplasm"/>
    <property type="evidence" value="ECO:0000266"/>
    <property type="project" value="RGD"/>
</dbReference>
<dbReference type="GO" id="GO:0005829">
    <property type="term" value="C:cytosol"/>
    <property type="evidence" value="ECO:0000266"/>
    <property type="project" value="RGD"/>
</dbReference>
<dbReference type="GO" id="GO:0022626">
    <property type="term" value="C:cytosolic ribosome"/>
    <property type="evidence" value="ECO:0000266"/>
    <property type="project" value="RGD"/>
</dbReference>
<dbReference type="GO" id="GO:0022627">
    <property type="term" value="C:cytosolic small ribosomal subunit"/>
    <property type="evidence" value="ECO:0000314"/>
    <property type="project" value="RGD"/>
</dbReference>
<dbReference type="GO" id="GO:0005730">
    <property type="term" value="C:nucleolus"/>
    <property type="evidence" value="ECO:0000314"/>
    <property type="project" value="MGI"/>
</dbReference>
<dbReference type="GO" id="GO:0014069">
    <property type="term" value="C:postsynaptic density"/>
    <property type="evidence" value="ECO:0000266"/>
    <property type="project" value="RGD"/>
</dbReference>
<dbReference type="GO" id="GO:0005840">
    <property type="term" value="C:ribosome"/>
    <property type="evidence" value="ECO:0000266"/>
    <property type="project" value="RGD"/>
</dbReference>
<dbReference type="GO" id="GO:0015935">
    <property type="term" value="C:small ribosomal subunit"/>
    <property type="evidence" value="ECO:0000314"/>
    <property type="project" value="RGD"/>
</dbReference>
<dbReference type="GO" id="GO:0032040">
    <property type="term" value="C:small-subunit processome"/>
    <property type="evidence" value="ECO:0000250"/>
    <property type="project" value="UniProtKB"/>
</dbReference>
<dbReference type="GO" id="GO:0045202">
    <property type="term" value="C:synapse"/>
    <property type="evidence" value="ECO:0000266"/>
    <property type="project" value="RGD"/>
</dbReference>
<dbReference type="GO" id="GO:0017134">
    <property type="term" value="F:fibroblast growth factor binding"/>
    <property type="evidence" value="ECO:0000266"/>
    <property type="project" value="RGD"/>
</dbReference>
<dbReference type="GO" id="GO:0042802">
    <property type="term" value="F:identical protein binding"/>
    <property type="evidence" value="ECO:0000266"/>
    <property type="project" value="RGD"/>
</dbReference>
<dbReference type="GO" id="GO:0019901">
    <property type="term" value="F:protein kinase binding"/>
    <property type="evidence" value="ECO:0000266"/>
    <property type="project" value="RGD"/>
</dbReference>
<dbReference type="GO" id="GO:0003723">
    <property type="term" value="F:RNA binding"/>
    <property type="evidence" value="ECO:0000318"/>
    <property type="project" value="GO_Central"/>
</dbReference>
<dbReference type="GO" id="GO:0003735">
    <property type="term" value="F:structural constituent of ribosome"/>
    <property type="evidence" value="ECO:0000314"/>
    <property type="project" value="HGNC-UCL"/>
</dbReference>
<dbReference type="GO" id="GO:0031369">
    <property type="term" value="F:translation initiation factor binding"/>
    <property type="evidence" value="ECO:0000353"/>
    <property type="project" value="UniProtKB"/>
</dbReference>
<dbReference type="GO" id="GO:0061844">
    <property type="term" value="P:antimicrobial humoral immune response mediated by antimicrobial peptide"/>
    <property type="evidence" value="ECO:0000266"/>
    <property type="project" value="RGD"/>
</dbReference>
<dbReference type="GO" id="GO:0030218">
    <property type="term" value="P:erythrocyte differentiation"/>
    <property type="evidence" value="ECO:0000250"/>
    <property type="project" value="HGNC-UCL"/>
</dbReference>
<dbReference type="GO" id="GO:0030490">
    <property type="term" value="P:maturation of SSU-rRNA"/>
    <property type="evidence" value="ECO:0000266"/>
    <property type="project" value="RGD"/>
</dbReference>
<dbReference type="GO" id="GO:0000462">
    <property type="term" value="P:maturation of SSU-rRNA from tricistronic rRNA transcript (SSU-rRNA, 5.8S rRNA, LSU-rRNA)"/>
    <property type="evidence" value="ECO:0000266"/>
    <property type="project" value="RGD"/>
</dbReference>
<dbReference type="GO" id="GO:0002548">
    <property type="term" value="P:monocyte chemotaxis"/>
    <property type="evidence" value="ECO:0000266"/>
    <property type="project" value="RGD"/>
</dbReference>
<dbReference type="GO" id="GO:0060266">
    <property type="term" value="P:negative regulation of respiratory burst involved in inflammatory response"/>
    <property type="evidence" value="ECO:0000266"/>
    <property type="project" value="RGD"/>
</dbReference>
<dbReference type="GO" id="GO:0007219">
    <property type="term" value="P:Notch signaling pathway"/>
    <property type="evidence" value="ECO:0000266"/>
    <property type="project" value="RGD"/>
</dbReference>
<dbReference type="GO" id="GO:0007000">
    <property type="term" value="P:nucleolus organization"/>
    <property type="evidence" value="ECO:0000266"/>
    <property type="project" value="RGD"/>
</dbReference>
<dbReference type="GO" id="GO:0060265">
    <property type="term" value="P:positive regulation of respiratory burst involved in inflammatory response"/>
    <property type="evidence" value="ECO:0000266"/>
    <property type="project" value="RGD"/>
</dbReference>
<dbReference type="GO" id="GO:0000028">
    <property type="term" value="P:ribosomal small subunit assembly"/>
    <property type="evidence" value="ECO:0000266"/>
    <property type="project" value="RGD"/>
</dbReference>
<dbReference type="GO" id="GO:0042274">
    <property type="term" value="P:ribosomal small subunit biogenesis"/>
    <property type="evidence" value="ECO:0000250"/>
    <property type="project" value="UniProtKB"/>
</dbReference>
<dbReference type="GO" id="GO:0006364">
    <property type="term" value="P:rRNA processing"/>
    <property type="evidence" value="ECO:0000266"/>
    <property type="project" value="RGD"/>
</dbReference>
<dbReference type="GO" id="GO:0006412">
    <property type="term" value="P:translation"/>
    <property type="evidence" value="ECO:0007669"/>
    <property type="project" value="InterPro"/>
</dbReference>
<dbReference type="FunFam" id="1.10.10.10:FF:000255">
    <property type="entry name" value="40S ribosomal protein S19"/>
    <property type="match status" value="1"/>
</dbReference>
<dbReference type="Gene3D" id="1.10.10.10">
    <property type="entry name" value="Winged helix-like DNA-binding domain superfamily/Winged helix DNA-binding domain"/>
    <property type="match status" value="1"/>
</dbReference>
<dbReference type="InterPro" id="IPR001266">
    <property type="entry name" value="Ribosomal_eS19"/>
</dbReference>
<dbReference type="InterPro" id="IPR018277">
    <property type="entry name" value="Ribosomal_eS19_CS"/>
</dbReference>
<dbReference type="InterPro" id="IPR036388">
    <property type="entry name" value="WH-like_DNA-bd_sf"/>
</dbReference>
<dbReference type="InterPro" id="IPR036390">
    <property type="entry name" value="WH_DNA-bd_sf"/>
</dbReference>
<dbReference type="PANTHER" id="PTHR11710">
    <property type="entry name" value="40S RIBOSOMAL PROTEIN S19"/>
    <property type="match status" value="1"/>
</dbReference>
<dbReference type="PANTHER" id="PTHR11710:SF31">
    <property type="entry name" value="SMALL RIBOSOMAL SUBUNIT PROTEIN ES19"/>
    <property type="match status" value="1"/>
</dbReference>
<dbReference type="Pfam" id="PF01090">
    <property type="entry name" value="Ribosomal_S19e"/>
    <property type="match status" value="1"/>
</dbReference>
<dbReference type="SMART" id="SM01413">
    <property type="entry name" value="Ribosomal_S19e"/>
    <property type="match status" value="1"/>
</dbReference>
<dbReference type="SUPFAM" id="SSF46785">
    <property type="entry name" value="Winged helix' DNA-binding domain"/>
    <property type="match status" value="1"/>
</dbReference>
<dbReference type="PROSITE" id="PS00628">
    <property type="entry name" value="RIBOSOMAL_S19E"/>
    <property type="match status" value="1"/>
</dbReference>